<evidence type="ECO:0000255" key="1">
    <source>
        <dbReference type="HAMAP-Rule" id="MF_00558"/>
    </source>
</evidence>
<proteinExistence type="inferred from homology"/>
<gene>
    <name evidence="1" type="primary">sucC</name>
    <name type="ordered locus">CPS_2221</name>
</gene>
<comment type="function">
    <text evidence="1">Succinyl-CoA synthetase functions in the citric acid cycle (TCA), coupling the hydrolysis of succinyl-CoA to the synthesis of either ATP or GTP and thus represents the only step of substrate-level phosphorylation in the TCA. The beta subunit provides nucleotide specificity of the enzyme and binds the substrate succinate, while the binding sites for coenzyme A and phosphate are found in the alpha subunit.</text>
</comment>
<comment type="catalytic activity">
    <reaction evidence="1">
        <text>succinate + ATP + CoA = succinyl-CoA + ADP + phosphate</text>
        <dbReference type="Rhea" id="RHEA:17661"/>
        <dbReference type="ChEBI" id="CHEBI:30031"/>
        <dbReference type="ChEBI" id="CHEBI:30616"/>
        <dbReference type="ChEBI" id="CHEBI:43474"/>
        <dbReference type="ChEBI" id="CHEBI:57287"/>
        <dbReference type="ChEBI" id="CHEBI:57292"/>
        <dbReference type="ChEBI" id="CHEBI:456216"/>
        <dbReference type="EC" id="6.2.1.5"/>
    </reaction>
    <physiologicalReaction direction="right-to-left" evidence="1">
        <dbReference type="Rhea" id="RHEA:17663"/>
    </physiologicalReaction>
</comment>
<comment type="catalytic activity">
    <reaction evidence="1">
        <text>GTP + succinate + CoA = succinyl-CoA + GDP + phosphate</text>
        <dbReference type="Rhea" id="RHEA:22120"/>
        <dbReference type="ChEBI" id="CHEBI:30031"/>
        <dbReference type="ChEBI" id="CHEBI:37565"/>
        <dbReference type="ChEBI" id="CHEBI:43474"/>
        <dbReference type="ChEBI" id="CHEBI:57287"/>
        <dbReference type="ChEBI" id="CHEBI:57292"/>
        <dbReference type="ChEBI" id="CHEBI:58189"/>
    </reaction>
    <physiologicalReaction direction="right-to-left" evidence="1">
        <dbReference type="Rhea" id="RHEA:22122"/>
    </physiologicalReaction>
</comment>
<comment type="cofactor">
    <cofactor evidence="1">
        <name>Mg(2+)</name>
        <dbReference type="ChEBI" id="CHEBI:18420"/>
    </cofactor>
    <text evidence="1">Binds 1 Mg(2+) ion per subunit.</text>
</comment>
<comment type="pathway">
    <text evidence="1">Carbohydrate metabolism; tricarboxylic acid cycle; succinate from succinyl-CoA (ligase route): step 1/1.</text>
</comment>
<comment type="subunit">
    <text evidence="1">Heterotetramer of two alpha and two beta subunits.</text>
</comment>
<comment type="similarity">
    <text evidence="1">Belongs to the succinate/malate CoA ligase beta subunit family.</text>
</comment>
<name>SUCC_COLP3</name>
<organism>
    <name type="scientific">Colwellia psychrerythraea (strain 34H / ATCC BAA-681)</name>
    <name type="common">Vibrio psychroerythus</name>
    <dbReference type="NCBI Taxonomy" id="167879"/>
    <lineage>
        <taxon>Bacteria</taxon>
        <taxon>Pseudomonadati</taxon>
        <taxon>Pseudomonadota</taxon>
        <taxon>Gammaproteobacteria</taxon>
        <taxon>Alteromonadales</taxon>
        <taxon>Colwelliaceae</taxon>
        <taxon>Colwellia</taxon>
    </lineage>
</organism>
<feature type="chain" id="PRO_1000082066" description="Succinate--CoA ligase [ADP-forming] subunit beta">
    <location>
        <begin position="1"/>
        <end position="388"/>
    </location>
</feature>
<feature type="domain" description="ATP-grasp" evidence="1">
    <location>
        <begin position="9"/>
        <end position="244"/>
    </location>
</feature>
<feature type="binding site" evidence="1">
    <location>
        <position position="46"/>
    </location>
    <ligand>
        <name>ATP</name>
        <dbReference type="ChEBI" id="CHEBI:30616"/>
    </ligand>
</feature>
<feature type="binding site" evidence="1">
    <location>
        <begin position="53"/>
        <end position="55"/>
    </location>
    <ligand>
        <name>ATP</name>
        <dbReference type="ChEBI" id="CHEBI:30616"/>
    </ligand>
</feature>
<feature type="binding site" evidence="1">
    <location>
        <position position="99"/>
    </location>
    <ligand>
        <name>ATP</name>
        <dbReference type="ChEBI" id="CHEBI:30616"/>
    </ligand>
</feature>
<feature type="binding site" evidence="1">
    <location>
        <position position="102"/>
    </location>
    <ligand>
        <name>ATP</name>
        <dbReference type="ChEBI" id="CHEBI:30616"/>
    </ligand>
</feature>
<feature type="binding site" evidence="1">
    <location>
        <position position="107"/>
    </location>
    <ligand>
        <name>ATP</name>
        <dbReference type="ChEBI" id="CHEBI:30616"/>
    </ligand>
</feature>
<feature type="binding site" evidence="1">
    <location>
        <position position="199"/>
    </location>
    <ligand>
        <name>Mg(2+)</name>
        <dbReference type="ChEBI" id="CHEBI:18420"/>
    </ligand>
</feature>
<feature type="binding site" evidence="1">
    <location>
        <position position="213"/>
    </location>
    <ligand>
        <name>Mg(2+)</name>
        <dbReference type="ChEBI" id="CHEBI:18420"/>
    </ligand>
</feature>
<feature type="binding site" evidence="1">
    <location>
        <position position="264"/>
    </location>
    <ligand>
        <name>substrate</name>
        <note>ligand shared with subunit alpha</note>
    </ligand>
</feature>
<feature type="binding site" evidence="1">
    <location>
        <begin position="321"/>
        <end position="323"/>
    </location>
    <ligand>
        <name>substrate</name>
        <note>ligand shared with subunit alpha</note>
    </ligand>
</feature>
<dbReference type="EC" id="6.2.1.5" evidence="1"/>
<dbReference type="EMBL" id="CP000083">
    <property type="protein sequence ID" value="AAZ27906.1"/>
    <property type="molecule type" value="Genomic_DNA"/>
</dbReference>
<dbReference type="RefSeq" id="WP_011043040.1">
    <property type="nucleotide sequence ID" value="NC_003910.7"/>
</dbReference>
<dbReference type="SMR" id="Q482S1"/>
<dbReference type="STRING" id="167879.CPS_2221"/>
<dbReference type="KEGG" id="cps:CPS_2221"/>
<dbReference type="eggNOG" id="COG0045">
    <property type="taxonomic scope" value="Bacteria"/>
</dbReference>
<dbReference type="HOGENOM" id="CLU_037430_0_2_6"/>
<dbReference type="UniPathway" id="UPA00223">
    <property type="reaction ID" value="UER00999"/>
</dbReference>
<dbReference type="Proteomes" id="UP000000547">
    <property type="component" value="Chromosome"/>
</dbReference>
<dbReference type="GO" id="GO:0005829">
    <property type="term" value="C:cytosol"/>
    <property type="evidence" value="ECO:0007669"/>
    <property type="project" value="TreeGrafter"/>
</dbReference>
<dbReference type="GO" id="GO:0042709">
    <property type="term" value="C:succinate-CoA ligase complex"/>
    <property type="evidence" value="ECO:0007669"/>
    <property type="project" value="TreeGrafter"/>
</dbReference>
<dbReference type="GO" id="GO:0005524">
    <property type="term" value="F:ATP binding"/>
    <property type="evidence" value="ECO:0007669"/>
    <property type="project" value="UniProtKB-UniRule"/>
</dbReference>
<dbReference type="GO" id="GO:0000287">
    <property type="term" value="F:magnesium ion binding"/>
    <property type="evidence" value="ECO:0007669"/>
    <property type="project" value="UniProtKB-UniRule"/>
</dbReference>
<dbReference type="GO" id="GO:0004775">
    <property type="term" value="F:succinate-CoA ligase (ADP-forming) activity"/>
    <property type="evidence" value="ECO:0007669"/>
    <property type="project" value="UniProtKB-UniRule"/>
</dbReference>
<dbReference type="GO" id="GO:0004776">
    <property type="term" value="F:succinate-CoA ligase (GDP-forming) activity"/>
    <property type="evidence" value="ECO:0007669"/>
    <property type="project" value="RHEA"/>
</dbReference>
<dbReference type="GO" id="GO:0006104">
    <property type="term" value="P:succinyl-CoA metabolic process"/>
    <property type="evidence" value="ECO:0007669"/>
    <property type="project" value="TreeGrafter"/>
</dbReference>
<dbReference type="GO" id="GO:0006099">
    <property type="term" value="P:tricarboxylic acid cycle"/>
    <property type="evidence" value="ECO:0007669"/>
    <property type="project" value="UniProtKB-UniRule"/>
</dbReference>
<dbReference type="FunFam" id="3.30.1490.20:FF:000002">
    <property type="entry name" value="Succinate--CoA ligase [ADP-forming] subunit beta"/>
    <property type="match status" value="1"/>
</dbReference>
<dbReference type="FunFam" id="3.30.470.20:FF:000002">
    <property type="entry name" value="Succinate--CoA ligase [ADP-forming] subunit beta"/>
    <property type="match status" value="1"/>
</dbReference>
<dbReference type="FunFam" id="3.40.50.261:FF:000001">
    <property type="entry name" value="Succinate--CoA ligase [ADP-forming] subunit beta"/>
    <property type="match status" value="1"/>
</dbReference>
<dbReference type="Gene3D" id="3.30.1490.20">
    <property type="entry name" value="ATP-grasp fold, A domain"/>
    <property type="match status" value="1"/>
</dbReference>
<dbReference type="Gene3D" id="3.30.470.20">
    <property type="entry name" value="ATP-grasp fold, B domain"/>
    <property type="match status" value="1"/>
</dbReference>
<dbReference type="Gene3D" id="3.40.50.261">
    <property type="entry name" value="Succinyl-CoA synthetase domains"/>
    <property type="match status" value="1"/>
</dbReference>
<dbReference type="HAMAP" id="MF_00558">
    <property type="entry name" value="Succ_CoA_beta"/>
    <property type="match status" value="1"/>
</dbReference>
<dbReference type="InterPro" id="IPR011761">
    <property type="entry name" value="ATP-grasp"/>
</dbReference>
<dbReference type="InterPro" id="IPR013650">
    <property type="entry name" value="ATP-grasp_succ-CoA_synth-type"/>
</dbReference>
<dbReference type="InterPro" id="IPR013815">
    <property type="entry name" value="ATP_grasp_subdomain_1"/>
</dbReference>
<dbReference type="InterPro" id="IPR017866">
    <property type="entry name" value="Succ-CoA_synthase_bsu_CS"/>
</dbReference>
<dbReference type="InterPro" id="IPR005811">
    <property type="entry name" value="SUCC_ACL_C"/>
</dbReference>
<dbReference type="InterPro" id="IPR005809">
    <property type="entry name" value="Succ_CoA_ligase-like_bsu"/>
</dbReference>
<dbReference type="InterPro" id="IPR016102">
    <property type="entry name" value="Succinyl-CoA_synth-like"/>
</dbReference>
<dbReference type="NCBIfam" id="NF001913">
    <property type="entry name" value="PRK00696.1"/>
    <property type="match status" value="1"/>
</dbReference>
<dbReference type="NCBIfam" id="TIGR01016">
    <property type="entry name" value="sucCoAbeta"/>
    <property type="match status" value="1"/>
</dbReference>
<dbReference type="PANTHER" id="PTHR11815:SF10">
    <property type="entry name" value="SUCCINATE--COA LIGASE [GDP-FORMING] SUBUNIT BETA, MITOCHONDRIAL"/>
    <property type="match status" value="1"/>
</dbReference>
<dbReference type="PANTHER" id="PTHR11815">
    <property type="entry name" value="SUCCINYL-COA SYNTHETASE BETA CHAIN"/>
    <property type="match status" value="1"/>
</dbReference>
<dbReference type="Pfam" id="PF08442">
    <property type="entry name" value="ATP-grasp_2"/>
    <property type="match status" value="1"/>
</dbReference>
<dbReference type="Pfam" id="PF00549">
    <property type="entry name" value="Ligase_CoA"/>
    <property type="match status" value="1"/>
</dbReference>
<dbReference type="PIRSF" id="PIRSF001554">
    <property type="entry name" value="SucCS_beta"/>
    <property type="match status" value="1"/>
</dbReference>
<dbReference type="SUPFAM" id="SSF56059">
    <property type="entry name" value="Glutathione synthetase ATP-binding domain-like"/>
    <property type="match status" value="1"/>
</dbReference>
<dbReference type="SUPFAM" id="SSF52210">
    <property type="entry name" value="Succinyl-CoA synthetase domains"/>
    <property type="match status" value="1"/>
</dbReference>
<dbReference type="PROSITE" id="PS50975">
    <property type="entry name" value="ATP_GRASP"/>
    <property type="match status" value="1"/>
</dbReference>
<dbReference type="PROSITE" id="PS01217">
    <property type="entry name" value="SUCCINYL_COA_LIG_3"/>
    <property type="match status" value="1"/>
</dbReference>
<keyword id="KW-0067">ATP-binding</keyword>
<keyword id="KW-0436">Ligase</keyword>
<keyword id="KW-0460">Magnesium</keyword>
<keyword id="KW-0479">Metal-binding</keyword>
<keyword id="KW-0547">Nucleotide-binding</keyword>
<keyword id="KW-0816">Tricarboxylic acid cycle</keyword>
<sequence>MNLHEYQAKQLFAEYGLPVSEGFACDTPQEAAEAADKIGGDMWVVKTQVHAGGRGKAGGVKLVKSKEEIKEFAQHWLGKNLVTYQTDANGQPVAKILVESCTDIANELYLGAVVDRASQRVVFMASTEGGVDIEKIAEETPELIHQAEIDPLVGAQPYQARELGFKLGLNPTQMKQFVKIFMGLAKMFEDCDFALLEINPLVITDEGNLHCLDGKIGIDGNAIYRQPKMRAFHDPSQEDEREAHAAQWELNYVALDGTVGCMVNGAGLAMGTMDIVNLHGGKPANFLDVGGGANKERVSEAFKIILSDDNVKAVLVNIFGGIVRCDMIAEGIIGAVKEVGVKVPVVVRLEGTNAELGREVLKNSGLDIIAAESLTDAATKVVAAAEGK</sequence>
<protein>
    <recommendedName>
        <fullName evidence="1">Succinate--CoA ligase [ADP-forming] subunit beta</fullName>
        <ecNumber evidence="1">6.2.1.5</ecNumber>
    </recommendedName>
    <alternativeName>
        <fullName evidence="1">Succinyl-CoA synthetase subunit beta</fullName>
        <shortName evidence="1">SCS-beta</shortName>
    </alternativeName>
</protein>
<accession>Q482S1</accession>
<reference key="1">
    <citation type="journal article" date="2005" name="Proc. Natl. Acad. Sci. U.S.A.">
        <title>The psychrophilic lifestyle as revealed by the genome sequence of Colwellia psychrerythraea 34H through genomic and proteomic analyses.</title>
        <authorList>
            <person name="Methe B.A."/>
            <person name="Nelson K.E."/>
            <person name="Deming J.W."/>
            <person name="Momen B."/>
            <person name="Melamud E."/>
            <person name="Zhang X."/>
            <person name="Moult J."/>
            <person name="Madupu R."/>
            <person name="Nelson W.C."/>
            <person name="Dodson R.J."/>
            <person name="Brinkac L.M."/>
            <person name="Daugherty S.C."/>
            <person name="Durkin A.S."/>
            <person name="DeBoy R.T."/>
            <person name="Kolonay J.F."/>
            <person name="Sullivan S.A."/>
            <person name="Zhou L."/>
            <person name="Davidsen T.M."/>
            <person name="Wu M."/>
            <person name="Huston A.L."/>
            <person name="Lewis M."/>
            <person name="Weaver B."/>
            <person name="Weidman J.F."/>
            <person name="Khouri H."/>
            <person name="Utterback T.R."/>
            <person name="Feldblyum T.V."/>
            <person name="Fraser C.M."/>
        </authorList>
    </citation>
    <scope>NUCLEOTIDE SEQUENCE [LARGE SCALE GENOMIC DNA]</scope>
    <source>
        <strain>34H / ATCC BAA-681</strain>
    </source>
</reference>